<keyword id="KW-0004">4Fe-4S</keyword>
<keyword id="KW-0408">Iron</keyword>
<keyword id="KW-0411">Iron-sulfur</keyword>
<keyword id="KW-0414">Isoprene biosynthesis</keyword>
<keyword id="KW-0479">Metal-binding</keyword>
<keyword id="KW-0560">Oxidoreductase</keyword>
<keyword id="KW-1185">Reference proteome</keyword>
<feature type="chain" id="PRO_1000123445" description="4-hydroxy-3-methylbut-2-en-1-yl diphosphate synthase (flavodoxin)">
    <location>
        <begin position="1"/>
        <end position="372"/>
    </location>
</feature>
<feature type="binding site" evidence="1">
    <location>
        <position position="270"/>
    </location>
    <ligand>
        <name>[4Fe-4S] cluster</name>
        <dbReference type="ChEBI" id="CHEBI:49883"/>
    </ligand>
</feature>
<feature type="binding site" evidence="1">
    <location>
        <position position="273"/>
    </location>
    <ligand>
        <name>[4Fe-4S] cluster</name>
        <dbReference type="ChEBI" id="CHEBI:49883"/>
    </ligand>
</feature>
<feature type="binding site" evidence="1">
    <location>
        <position position="305"/>
    </location>
    <ligand>
        <name>[4Fe-4S] cluster</name>
        <dbReference type="ChEBI" id="CHEBI:49883"/>
    </ligand>
</feature>
<feature type="binding site" evidence="1">
    <location>
        <position position="312"/>
    </location>
    <ligand>
        <name>[4Fe-4S] cluster</name>
        <dbReference type="ChEBI" id="CHEBI:49883"/>
    </ligand>
</feature>
<gene>
    <name evidence="1" type="primary">ispG</name>
    <name type="ordered locus">EC55989_2800</name>
</gene>
<comment type="function">
    <text evidence="1">Converts 2C-methyl-D-erythritol 2,4-cyclodiphosphate (ME-2,4cPP) into 1-hydroxy-2-methyl-2-(E)-butenyl 4-diphosphate.</text>
</comment>
<comment type="catalytic activity">
    <reaction evidence="1">
        <text>(2E)-4-hydroxy-3-methylbut-2-enyl diphosphate + oxidized [flavodoxin] + H2O + 2 H(+) = 2-C-methyl-D-erythritol 2,4-cyclic diphosphate + reduced [flavodoxin]</text>
        <dbReference type="Rhea" id="RHEA:43604"/>
        <dbReference type="Rhea" id="RHEA-COMP:10622"/>
        <dbReference type="Rhea" id="RHEA-COMP:10623"/>
        <dbReference type="ChEBI" id="CHEBI:15377"/>
        <dbReference type="ChEBI" id="CHEBI:15378"/>
        <dbReference type="ChEBI" id="CHEBI:57618"/>
        <dbReference type="ChEBI" id="CHEBI:58210"/>
        <dbReference type="ChEBI" id="CHEBI:58483"/>
        <dbReference type="ChEBI" id="CHEBI:128753"/>
        <dbReference type="EC" id="1.17.7.3"/>
    </reaction>
</comment>
<comment type="cofactor">
    <cofactor evidence="1">
        <name>[4Fe-4S] cluster</name>
        <dbReference type="ChEBI" id="CHEBI:49883"/>
    </cofactor>
    <text evidence="1">Binds 1 [4Fe-4S] cluster.</text>
</comment>
<comment type="pathway">
    <text evidence="1">Isoprenoid biosynthesis; isopentenyl diphosphate biosynthesis via DXP pathway; isopentenyl diphosphate from 1-deoxy-D-xylulose 5-phosphate: step 5/6.</text>
</comment>
<comment type="similarity">
    <text evidence="1">Belongs to the IspG family.</text>
</comment>
<accession>B7LDA7</accession>
<dbReference type="EC" id="1.17.7.3" evidence="1"/>
<dbReference type="EMBL" id="CU928145">
    <property type="protein sequence ID" value="CAU98673.1"/>
    <property type="molecule type" value="Genomic_DNA"/>
</dbReference>
<dbReference type="RefSeq" id="WP_000551807.1">
    <property type="nucleotide sequence ID" value="NZ_CP028304.1"/>
</dbReference>
<dbReference type="SMR" id="B7LDA7"/>
<dbReference type="GeneID" id="86947404"/>
<dbReference type="KEGG" id="eck:EC55989_2800"/>
<dbReference type="HOGENOM" id="CLU_042258_0_0_6"/>
<dbReference type="UniPathway" id="UPA00056">
    <property type="reaction ID" value="UER00096"/>
</dbReference>
<dbReference type="Proteomes" id="UP000000746">
    <property type="component" value="Chromosome"/>
</dbReference>
<dbReference type="GO" id="GO:0051539">
    <property type="term" value="F:4 iron, 4 sulfur cluster binding"/>
    <property type="evidence" value="ECO:0007669"/>
    <property type="project" value="UniProtKB-UniRule"/>
</dbReference>
<dbReference type="GO" id="GO:0046429">
    <property type="term" value="F:4-hydroxy-3-methylbut-2-en-1-yl diphosphate synthase activity (ferredoxin)"/>
    <property type="evidence" value="ECO:0007669"/>
    <property type="project" value="UniProtKB-UniRule"/>
</dbReference>
<dbReference type="GO" id="GO:0141197">
    <property type="term" value="F:4-hydroxy-3-methylbut-2-enyl-diphosphate synthase activity (flavodoxin)"/>
    <property type="evidence" value="ECO:0007669"/>
    <property type="project" value="UniProtKB-EC"/>
</dbReference>
<dbReference type="GO" id="GO:0005506">
    <property type="term" value="F:iron ion binding"/>
    <property type="evidence" value="ECO:0007669"/>
    <property type="project" value="InterPro"/>
</dbReference>
<dbReference type="GO" id="GO:0019288">
    <property type="term" value="P:isopentenyl diphosphate biosynthetic process, methylerythritol 4-phosphate pathway"/>
    <property type="evidence" value="ECO:0007669"/>
    <property type="project" value="UniProtKB-UniRule"/>
</dbReference>
<dbReference type="GO" id="GO:0016114">
    <property type="term" value="P:terpenoid biosynthetic process"/>
    <property type="evidence" value="ECO:0007669"/>
    <property type="project" value="InterPro"/>
</dbReference>
<dbReference type="FunFam" id="3.20.20.20:FF:000001">
    <property type="entry name" value="4-hydroxy-3-methylbut-2-en-1-yl diphosphate synthase (flavodoxin)"/>
    <property type="match status" value="1"/>
</dbReference>
<dbReference type="FunFam" id="3.30.413.10:FF:000002">
    <property type="entry name" value="4-hydroxy-3-methylbut-2-en-1-yl diphosphate synthase (flavodoxin)"/>
    <property type="match status" value="1"/>
</dbReference>
<dbReference type="Gene3D" id="3.20.20.20">
    <property type="entry name" value="Dihydropteroate synthase-like"/>
    <property type="match status" value="1"/>
</dbReference>
<dbReference type="Gene3D" id="3.30.413.10">
    <property type="entry name" value="Sulfite Reductase Hemoprotein, domain 1"/>
    <property type="match status" value="1"/>
</dbReference>
<dbReference type="HAMAP" id="MF_00159">
    <property type="entry name" value="IspG"/>
    <property type="match status" value="1"/>
</dbReference>
<dbReference type="InterPro" id="IPR011005">
    <property type="entry name" value="Dihydropteroate_synth-like_sf"/>
</dbReference>
<dbReference type="InterPro" id="IPR016425">
    <property type="entry name" value="IspG_bac"/>
</dbReference>
<dbReference type="InterPro" id="IPR004588">
    <property type="entry name" value="IspG_bac-typ"/>
</dbReference>
<dbReference type="InterPro" id="IPR045854">
    <property type="entry name" value="NO2/SO3_Rdtase_4Fe4S_sf"/>
</dbReference>
<dbReference type="NCBIfam" id="TIGR00612">
    <property type="entry name" value="ispG_gcpE"/>
    <property type="match status" value="1"/>
</dbReference>
<dbReference type="NCBIfam" id="NF001540">
    <property type="entry name" value="PRK00366.1"/>
    <property type="match status" value="1"/>
</dbReference>
<dbReference type="PANTHER" id="PTHR30454">
    <property type="entry name" value="4-HYDROXY-3-METHYLBUT-2-EN-1-YL DIPHOSPHATE SYNTHASE"/>
    <property type="match status" value="1"/>
</dbReference>
<dbReference type="PANTHER" id="PTHR30454:SF0">
    <property type="entry name" value="4-HYDROXY-3-METHYLBUT-2-EN-1-YL DIPHOSPHATE SYNTHASE (FERREDOXIN), CHLOROPLASTIC"/>
    <property type="match status" value="1"/>
</dbReference>
<dbReference type="Pfam" id="PF04551">
    <property type="entry name" value="GcpE"/>
    <property type="match status" value="1"/>
</dbReference>
<dbReference type="PIRSF" id="PIRSF004640">
    <property type="entry name" value="IspG"/>
    <property type="match status" value="1"/>
</dbReference>
<dbReference type="SUPFAM" id="SSF51717">
    <property type="entry name" value="Dihydropteroate synthetase-like"/>
    <property type="match status" value="1"/>
</dbReference>
<dbReference type="SUPFAM" id="SSF56014">
    <property type="entry name" value="Nitrite and sulphite reductase 4Fe-4S domain-like"/>
    <property type="match status" value="1"/>
</dbReference>
<proteinExistence type="inferred from homology"/>
<reference key="1">
    <citation type="journal article" date="2009" name="PLoS Genet.">
        <title>Organised genome dynamics in the Escherichia coli species results in highly diverse adaptive paths.</title>
        <authorList>
            <person name="Touchon M."/>
            <person name="Hoede C."/>
            <person name="Tenaillon O."/>
            <person name="Barbe V."/>
            <person name="Baeriswyl S."/>
            <person name="Bidet P."/>
            <person name="Bingen E."/>
            <person name="Bonacorsi S."/>
            <person name="Bouchier C."/>
            <person name="Bouvet O."/>
            <person name="Calteau A."/>
            <person name="Chiapello H."/>
            <person name="Clermont O."/>
            <person name="Cruveiller S."/>
            <person name="Danchin A."/>
            <person name="Diard M."/>
            <person name="Dossat C."/>
            <person name="Karoui M.E."/>
            <person name="Frapy E."/>
            <person name="Garry L."/>
            <person name="Ghigo J.M."/>
            <person name="Gilles A.M."/>
            <person name="Johnson J."/>
            <person name="Le Bouguenec C."/>
            <person name="Lescat M."/>
            <person name="Mangenot S."/>
            <person name="Martinez-Jehanne V."/>
            <person name="Matic I."/>
            <person name="Nassif X."/>
            <person name="Oztas S."/>
            <person name="Petit M.A."/>
            <person name="Pichon C."/>
            <person name="Rouy Z."/>
            <person name="Ruf C.S."/>
            <person name="Schneider D."/>
            <person name="Tourret J."/>
            <person name="Vacherie B."/>
            <person name="Vallenet D."/>
            <person name="Medigue C."/>
            <person name="Rocha E.P.C."/>
            <person name="Denamur E."/>
        </authorList>
    </citation>
    <scope>NUCLEOTIDE SEQUENCE [LARGE SCALE GENOMIC DNA]</scope>
    <source>
        <strain>55989 / EAEC</strain>
    </source>
</reference>
<protein>
    <recommendedName>
        <fullName evidence="1">4-hydroxy-3-methylbut-2-en-1-yl diphosphate synthase (flavodoxin)</fullName>
        <ecNumber evidence="1">1.17.7.3</ecNumber>
    </recommendedName>
    <alternativeName>
        <fullName evidence="1">1-hydroxy-2-methyl-2-(E)-butenyl 4-diphosphate synthase</fullName>
    </alternativeName>
</protein>
<organism>
    <name type="scientific">Escherichia coli (strain 55989 / EAEC)</name>
    <dbReference type="NCBI Taxonomy" id="585055"/>
    <lineage>
        <taxon>Bacteria</taxon>
        <taxon>Pseudomonadati</taxon>
        <taxon>Pseudomonadota</taxon>
        <taxon>Gammaproteobacteria</taxon>
        <taxon>Enterobacterales</taxon>
        <taxon>Enterobacteriaceae</taxon>
        <taxon>Escherichia</taxon>
    </lineage>
</organism>
<evidence type="ECO:0000255" key="1">
    <source>
        <dbReference type="HAMAP-Rule" id="MF_00159"/>
    </source>
</evidence>
<name>ISPG_ECO55</name>
<sequence length="372" mass="40684">MHNQAPIQRRKSTRIYVGNVPIGDGAPIAVQSMTNTRTTDVEATVNQIKALERVGADIVRVSVPTMDAAEAFKLIKQQVNVPLVADIHFDYRIALKVAEYGVDCLRINPGNIGNEERIRMVVDCARDKNIPIRIGVNAGSLEKDLQEKYGEPTPQALLESAMRHVDHLDRLNFDQFKVSVKASDVFLAVESYRLLAKQIDQPLHLGITEAGGARSGAVKSAIGLGLLLSEGIGDTLRVSLAADPVEEIKVGFDILKSLRIRSRGINFIACPTCSRQEFDVIGTVNALEQRLEDIITPMDVSIIGCVVNGPGEALVSTLGVTGGNKKSGLYEDGVRKDRLDNNDMIDQLEARIRAKASQLDEARRIDVQQVEK</sequence>